<dbReference type="EMBL" id="AP009351">
    <property type="protein sequence ID" value="BAF68413.1"/>
    <property type="molecule type" value="Genomic_DNA"/>
</dbReference>
<dbReference type="RefSeq" id="WP_000547687.1">
    <property type="nucleotide sequence ID" value="NZ_JBBIAE010000006.1"/>
</dbReference>
<dbReference type="SMR" id="A6QJ81"/>
<dbReference type="KEGG" id="sae:NWMN_2141"/>
<dbReference type="HOGENOM" id="CLU_093315_2_0_9"/>
<dbReference type="Proteomes" id="UP000006386">
    <property type="component" value="Chromosome"/>
</dbReference>
<dbReference type="GO" id="GO:1990904">
    <property type="term" value="C:ribonucleoprotein complex"/>
    <property type="evidence" value="ECO:0007669"/>
    <property type="project" value="UniProtKB-KW"/>
</dbReference>
<dbReference type="GO" id="GO:0005840">
    <property type="term" value="C:ribosome"/>
    <property type="evidence" value="ECO:0007669"/>
    <property type="project" value="UniProtKB-KW"/>
</dbReference>
<dbReference type="GO" id="GO:0019843">
    <property type="term" value="F:rRNA binding"/>
    <property type="evidence" value="ECO:0007669"/>
    <property type="project" value="UniProtKB-UniRule"/>
</dbReference>
<dbReference type="GO" id="GO:0003735">
    <property type="term" value="F:structural constituent of ribosome"/>
    <property type="evidence" value="ECO:0007669"/>
    <property type="project" value="InterPro"/>
</dbReference>
<dbReference type="GO" id="GO:0006412">
    <property type="term" value="P:translation"/>
    <property type="evidence" value="ECO:0007669"/>
    <property type="project" value="UniProtKB-UniRule"/>
</dbReference>
<dbReference type="CDD" id="cd06089">
    <property type="entry name" value="KOW_RPL26"/>
    <property type="match status" value="1"/>
</dbReference>
<dbReference type="FunFam" id="2.30.30.30:FF:000004">
    <property type="entry name" value="50S ribosomal protein L24"/>
    <property type="match status" value="1"/>
</dbReference>
<dbReference type="Gene3D" id="2.30.30.30">
    <property type="match status" value="1"/>
</dbReference>
<dbReference type="HAMAP" id="MF_01326_B">
    <property type="entry name" value="Ribosomal_uL24_B"/>
    <property type="match status" value="1"/>
</dbReference>
<dbReference type="InterPro" id="IPR005824">
    <property type="entry name" value="KOW"/>
</dbReference>
<dbReference type="InterPro" id="IPR014722">
    <property type="entry name" value="Rib_uL2_dom2"/>
</dbReference>
<dbReference type="InterPro" id="IPR003256">
    <property type="entry name" value="Ribosomal_uL24"/>
</dbReference>
<dbReference type="InterPro" id="IPR005825">
    <property type="entry name" value="Ribosomal_uL24_CS"/>
</dbReference>
<dbReference type="InterPro" id="IPR041988">
    <property type="entry name" value="Ribosomal_uL24_KOW"/>
</dbReference>
<dbReference type="InterPro" id="IPR008991">
    <property type="entry name" value="Translation_prot_SH3-like_sf"/>
</dbReference>
<dbReference type="NCBIfam" id="TIGR01079">
    <property type="entry name" value="rplX_bact"/>
    <property type="match status" value="1"/>
</dbReference>
<dbReference type="PANTHER" id="PTHR12903">
    <property type="entry name" value="MITOCHONDRIAL RIBOSOMAL PROTEIN L24"/>
    <property type="match status" value="1"/>
</dbReference>
<dbReference type="Pfam" id="PF00467">
    <property type="entry name" value="KOW"/>
    <property type="match status" value="1"/>
</dbReference>
<dbReference type="Pfam" id="PF17136">
    <property type="entry name" value="ribosomal_L24"/>
    <property type="match status" value="1"/>
</dbReference>
<dbReference type="SMART" id="SM00739">
    <property type="entry name" value="KOW"/>
    <property type="match status" value="1"/>
</dbReference>
<dbReference type="SUPFAM" id="SSF50104">
    <property type="entry name" value="Translation proteins SH3-like domain"/>
    <property type="match status" value="1"/>
</dbReference>
<dbReference type="PROSITE" id="PS01108">
    <property type="entry name" value="RIBOSOMAL_L24"/>
    <property type="match status" value="1"/>
</dbReference>
<proteinExistence type="inferred from homology"/>
<organism>
    <name type="scientific">Staphylococcus aureus (strain Newman)</name>
    <dbReference type="NCBI Taxonomy" id="426430"/>
    <lineage>
        <taxon>Bacteria</taxon>
        <taxon>Bacillati</taxon>
        <taxon>Bacillota</taxon>
        <taxon>Bacilli</taxon>
        <taxon>Bacillales</taxon>
        <taxon>Staphylococcaceae</taxon>
        <taxon>Staphylococcus</taxon>
    </lineage>
</organism>
<accession>A6QJ81</accession>
<name>RL24_STAAE</name>
<gene>
    <name evidence="1" type="primary">rplX</name>
    <name type="ordered locus">NWMN_2141</name>
</gene>
<reference key="1">
    <citation type="journal article" date="2008" name="J. Bacteriol.">
        <title>Genome sequence of Staphylococcus aureus strain Newman and comparative analysis of staphylococcal genomes: polymorphism and evolution of two major pathogenicity islands.</title>
        <authorList>
            <person name="Baba T."/>
            <person name="Bae T."/>
            <person name="Schneewind O."/>
            <person name="Takeuchi F."/>
            <person name="Hiramatsu K."/>
        </authorList>
    </citation>
    <scope>NUCLEOTIDE SEQUENCE [LARGE SCALE GENOMIC DNA]</scope>
    <source>
        <strain>Newman</strain>
    </source>
</reference>
<keyword id="KW-0687">Ribonucleoprotein</keyword>
<keyword id="KW-0689">Ribosomal protein</keyword>
<keyword id="KW-0694">RNA-binding</keyword>
<keyword id="KW-0699">rRNA-binding</keyword>
<comment type="function">
    <text evidence="1">One of two assembly initiator proteins, it binds directly to the 5'-end of the 23S rRNA, where it nucleates assembly of the 50S subunit.</text>
</comment>
<comment type="function">
    <text evidence="1">One of the proteins that surrounds the polypeptide exit tunnel on the outside of the subunit.</text>
</comment>
<comment type="subunit">
    <text evidence="1">Part of the 50S ribosomal subunit.</text>
</comment>
<comment type="similarity">
    <text evidence="1">Belongs to the universal ribosomal protein uL24 family.</text>
</comment>
<evidence type="ECO:0000255" key="1">
    <source>
        <dbReference type="HAMAP-Rule" id="MF_01326"/>
    </source>
</evidence>
<evidence type="ECO:0000305" key="2"/>
<feature type="chain" id="PRO_1000073263" description="Large ribosomal subunit protein uL24">
    <location>
        <begin position="1"/>
        <end position="105"/>
    </location>
</feature>
<sequence length="105" mass="11536">MHIKKGDNVKVIAGKDKGKEGKVIATLPKKDRVVVEGVNIMKKHQKPTQLNPEGGILETEAAIHVSNVQLLDPKTNEPTRVGYKFVDGKKVRIAKKSGEEIKSNN</sequence>
<protein>
    <recommendedName>
        <fullName evidence="1">Large ribosomal subunit protein uL24</fullName>
    </recommendedName>
    <alternativeName>
        <fullName evidence="2">50S ribosomal protein L24</fullName>
    </alternativeName>
</protein>